<keyword id="KW-1185">Reference proteome</keyword>
<protein>
    <recommendedName>
        <fullName evidence="1">UPF0736 protein GK0808</fullName>
    </recommendedName>
</protein>
<feature type="chain" id="PRO_0000369151" description="UPF0736 protein GK0808">
    <location>
        <begin position="1"/>
        <end position="246"/>
    </location>
</feature>
<proteinExistence type="inferred from homology"/>
<organism>
    <name type="scientific">Geobacillus kaustophilus (strain HTA426)</name>
    <dbReference type="NCBI Taxonomy" id="235909"/>
    <lineage>
        <taxon>Bacteria</taxon>
        <taxon>Bacillati</taxon>
        <taxon>Bacillota</taxon>
        <taxon>Bacilli</taxon>
        <taxon>Bacillales</taxon>
        <taxon>Anoxybacillaceae</taxon>
        <taxon>Geobacillus</taxon>
        <taxon>Geobacillus thermoleovorans group</taxon>
    </lineage>
</organism>
<comment type="similarity">
    <text evidence="1">Belongs to the UPF0736 family.</text>
</comment>
<accession>Q5L1T7</accession>
<reference key="1">
    <citation type="journal article" date="2004" name="Nucleic Acids Res.">
        <title>Thermoadaptation trait revealed by the genome sequence of thermophilic Geobacillus kaustophilus.</title>
        <authorList>
            <person name="Takami H."/>
            <person name="Takaki Y."/>
            <person name="Chee G.-J."/>
            <person name="Nishi S."/>
            <person name="Shimamura S."/>
            <person name="Suzuki H."/>
            <person name="Matsui S."/>
            <person name="Uchiyama I."/>
        </authorList>
    </citation>
    <scope>NUCLEOTIDE SEQUENCE [LARGE SCALE GENOMIC DNA]</scope>
    <source>
        <strain>HTA426</strain>
    </source>
</reference>
<evidence type="ECO:0000255" key="1">
    <source>
        <dbReference type="HAMAP-Rule" id="MF_01860"/>
    </source>
</evidence>
<dbReference type="EMBL" id="BA000043">
    <property type="protein sequence ID" value="BAD75093.1"/>
    <property type="molecule type" value="Genomic_DNA"/>
</dbReference>
<dbReference type="RefSeq" id="WP_011230309.1">
    <property type="nucleotide sequence ID" value="NC_006510.1"/>
</dbReference>
<dbReference type="SMR" id="Q5L1T7"/>
<dbReference type="STRING" id="235909.GK0808"/>
<dbReference type="KEGG" id="gka:GK0808"/>
<dbReference type="eggNOG" id="ENOG502Z8PJ">
    <property type="taxonomic scope" value="Bacteria"/>
</dbReference>
<dbReference type="HOGENOM" id="CLU_1101152_0_0_9"/>
<dbReference type="Proteomes" id="UP000001172">
    <property type="component" value="Chromosome"/>
</dbReference>
<dbReference type="HAMAP" id="MF_01860">
    <property type="entry name" value="UPF0736"/>
    <property type="match status" value="1"/>
</dbReference>
<dbReference type="InterPro" id="IPR020909">
    <property type="entry name" value="UPF0736"/>
</dbReference>
<dbReference type="Pfam" id="PF12227">
    <property type="entry name" value="DUF3603"/>
    <property type="match status" value="1"/>
</dbReference>
<gene>
    <name type="ordered locus">GK0808</name>
</gene>
<name>Y808_GEOKA</name>
<sequence>MLYLHDIWVNWFEGEENGYNVCHFHEWRKDDQIELLDQVPLLKVSPALFHYIENSLSDLPKPLLDDVHQKAYVRKNHERIQLDYCFVVTDGAGVLAVDTIGYQIPIRKSRLIPRQEQLVYEMAAEAEERDYPLPRYEKEYHILSPAPELMCGLTRKERQLKQLLFMALDQLYSTKNTAQMRYWYTEWAPEKYAAIQKMSFDEAWEQLYNETKYGWSERHEQLCENLIKGQPFFEKLWEMEQEPKVN</sequence>